<name>GLP2R_HUMAN</name>
<dbReference type="EMBL" id="AF105367">
    <property type="protein sequence ID" value="AAD16895.1"/>
    <property type="molecule type" value="mRNA"/>
</dbReference>
<dbReference type="EMBL" id="BC096262">
    <property type="protein sequence ID" value="AAH96262.1"/>
    <property type="molecule type" value="mRNA"/>
</dbReference>
<dbReference type="CCDS" id="CCDS11150.1"/>
<dbReference type="RefSeq" id="NP_004237.1">
    <property type="nucleotide sequence ID" value="NM_004246.3"/>
</dbReference>
<dbReference type="PDB" id="7D68">
    <property type="method" value="EM"/>
    <property type="resolution" value="3.00 A"/>
    <property type="chains" value="R=1-490"/>
</dbReference>
<dbReference type="PDBsum" id="7D68"/>
<dbReference type="EMDB" id="EMD-30590"/>
<dbReference type="SMR" id="O95838"/>
<dbReference type="BioGRID" id="114746">
    <property type="interactions" value="2"/>
</dbReference>
<dbReference type="CORUM" id="O95838"/>
<dbReference type="FunCoup" id="O95838">
    <property type="interactions" value="809"/>
</dbReference>
<dbReference type="IntAct" id="O95838">
    <property type="interactions" value="1"/>
</dbReference>
<dbReference type="MINT" id="O95838"/>
<dbReference type="STRING" id="9606.ENSP00000262441"/>
<dbReference type="BindingDB" id="O95838"/>
<dbReference type="ChEMBL" id="CHEMBL5844"/>
<dbReference type="DrugBank" id="DB00040">
    <property type="generic name" value="Glucagon"/>
</dbReference>
<dbReference type="DrugBank" id="DB08900">
    <property type="generic name" value="Teduglutide"/>
</dbReference>
<dbReference type="DrugCentral" id="O95838"/>
<dbReference type="GuidetoPHARMACOLOGY" id="250"/>
<dbReference type="GlyCosmos" id="O95838">
    <property type="glycosylation" value="4 sites, No reported glycans"/>
</dbReference>
<dbReference type="GlyGen" id="O95838">
    <property type="glycosylation" value="6 sites, 1 O-linked glycan (2 sites)"/>
</dbReference>
<dbReference type="iPTMnet" id="O95838"/>
<dbReference type="PhosphoSitePlus" id="O95838"/>
<dbReference type="BioMuta" id="GLP2R"/>
<dbReference type="jPOST" id="O95838"/>
<dbReference type="MassIVE" id="O95838"/>
<dbReference type="PaxDb" id="9606-ENSP00000262441"/>
<dbReference type="PeptideAtlas" id="O95838"/>
<dbReference type="ProteomicsDB" id="51084"/>
<dbReference type="Antibodypedia" id="12679">
    <property type="antibodies" value="378 antibodies from 34 providers"/>
</dbReference>
<dbReference type="DNASU" id="9340"/>
<dbReference type="Ensembl" id="ENST00000262441.10">
    <property type="protein sequence ID" value="ENSP00000262441.5"/>
    <property type="gene ID" value="ENSG00000065325.13"/>
</dbReference>
<dbReference type="GeneID" id="9340"/>
<dbReference type="KEGG" id="hsa:9340"/>
<dbReference type="MANE-Select" id="ENST00000262441.10">
    <property type="protein sequence ID" value="ENSP00000262441.5"/>
    <property type="RefSeq nucleotide sequence ID" value="NM_004246.3"/>
    <property type="RefSeq protein sequence ID" value="NP_004237.1"/>
</dbReference>
<dbReference type="UCSC" id="uc002gmd.2">
    <property type="organism name" value="human"/>
</dbReference>
<dbReference type="AGR" id="HGNC:4325"/>
<dbReference type="CTD" id="9340"/>
<dbReference type="DisGeNET" id="9340"/>
<dbReference type="GeneCards" id="GLP2R"/>
<dbReference type="HGNC" id="HGNC:4325">
    <property type="gene designation" value="GLP2R"/>
</dbReference>
<dbReference type="HPA" id="ENSG00000065325">
    <property type="expression patterns" value="Tissue enhanced (gallbladder, intestine, urinary bladder)"/>
</dbReference>
<dbReference type="MIM" id="603659">
    <property type="type" value="gene"/>
</dbReference>
<dbReference type="neXtProt" id="NX_O95838"/>
<dbReference type="OpenTargets" id="ENSG00000065325"/>
<dbReference type="PharmGKB" id="PA28726"/>
<dbReference type="VEuPathDB" id="HostDB:ENSG00000065325"/>
<dbReference type="eggNOG" id="KOG4564">
    <property type="taxonomic scope" value="Eukaryota"/>
</dbReference>
<dbReference type="GeneTree" id="ENSGT00940000158127"/>
<dbReference type="HOGENOM" id="CLU_002753_4_0_1"/>
<dbReference type="InParanoid" id="O95838"/>
<dbReference type="OMA" id="SGVFCNG"/>
<dbReference type="OrthoDB" id="5967113at2759"/>
<dbReference type="PAN-GO" id="O95838">
    <property type="GO annotations" value="4 GO annotations based on evolutionary models"/>
</dbReference>
<dbReference type="PhylomeDB" id="O95838"/>
<dbReference type="TreeFam" id="TF315710"/>
<dbReference type="PathwayCommons" id="O95838"/>
<dbReference type="Reactome" id="R-HSA-418555">
    <property type="pathway name" value="G alpha (s) signalling events"/>
</dbReference>
<dbReference type="Reactome" id="R-HSA-420092">
    <property type="pathway name" value="Glucagon-type ligand receptors"/>
</dbReference>
<dbReference type="SignaLink" id="O95838"/>
<dbReference type="BioGRID-ORCS" id="9340">
    <property type="hits" value="15 hits in 1156 CRISPR screens"/>
</dbReference>
<dbReference type="GeneWiki" id="Glucagon-like_peptide_2_receptor"/>
<dbReference type="GenomeRNAi" id="9340"/>
<dbReference type="Pharos" id="O95838">
    <property type="development level" value="Tclin"/>
</dbReference>
<dbReference type="PRO" id="PR:O95838"/>
<dbReference type="Proteomes" id="UP000005640">
    <property type="component" value="Chromosome 17"/>
</dbReference>
<dbReference type="RNAct" id="O95838">
    <property type="molecule type" value="protein"/>
</dbReference>
<dbReference type="Bgee" id="ENSG00000065325">
    <property type="expression patterns" value="Expressed in male germ line stem cell (sensu Vertebrata) in testis and 85 other cell types or tissues"/>
</dbReference>
<dbReference type="ExpressionAtlas" id="O95838">
    <property type="expression patterns" value="baseline and differential"/>
</dbReference>
<dbReference type="GO" id="GO:0016020">
    <property type="term" value="C:membrane"/>
    <property type="evidence" value="ECO:0000304"/>
    <property type="project" value="ProtInc"/>
</dbReference>
<dbReference type="GO" id="GO:0005886">
    <property type="term" value="C:plasma membrane"/>
    <property type="evidence" value="ECO:0000318"/>
    <property type="project" value="GO_Central"/>
</dbReference>
<dbReference type="GO" id="GO:0004930">
    <property type="term" value="F:G protein-coupled receptor activity"/>
    <property type="evidence" value="ECO:0000304"/>
    <property type="project" value="ProtInc"/>
</dbReference>
<dbReference type="GO" id="GO:0004967">
    <property type="term" value="F:glucagon receptor activity"/>
    <property type="evidence" value="ECO:0000318"/>
    <property type="project" value="GO_Central"/>
</dbReference>
<dbReference type="GO" id="GO:0017046">
    <property type="term" value="F:peptide hormone binding"/>
    <property type="evidence" value="ECO:0000318"/>
    <property type="project" value="GO_Central"/>
</dbReference>
<dbReference type="GO" id="GO:0007188">
    <property type="term" value="P:adenylate cyclase-modulating G protein-coupled receptor signaling pathway"/>
    <property type="evidence" value="ECO:0000318"/>
    <property type="project" value="GO_Central"/>
</dbReference>
<dbReference type="GO" id="GO:0007166">
    <property type="term" value="P:cell surface receptor signaling pathway"/>
    <property type="evidence" value="ECO:0007669"/>
    <property type="project" value="InterPro"/>
</dbReference>
<dbReference type="GO" id="GO:0008284">
    <property type="term" value="P:positive regulation of cell population proliferation"/>
    <property type="evidence" value="ECO:0000304"/>
    <property type="project" value="ProtInc"/>
</dbReference>
<dbReference type="CDD" id="cd15266">
    <property type="entry name" value="7tmB1_GLP2R"/>
    <property type="match status" value="1"/>
</dbReference>
<dbReference type="FunFam" id="1.20.1070.10:FF:000196">
    <property type="entry name" value="Glucagon like peptide 2 receptor"/>
    <property type="match status" value="1"/>
</dbReference>
<dbReference type="FunFam" id="4.10.1240.10:FF:000017">
    <property type="entry name" value="Glucagon like peptide 2 receptor"/>
    <property type="match status" value="1"/>
</dbReference>
<dbReference type="Gene3D" id="4.10.1240.10">
    <property type="entry name" value="GPCR, family 2, extracellular hormone receptor domain"/>
    <property type="match status" value="1"/>
</dbReference>
<dbReference type="Gene3D" id="1.20.1070.10">
    <property type="entry name" value="Rhodopsin 7-helix transmembrane proteins"/>
    <property type="match status" value="1"/>
</dbReference>
<dbReference type="InterPro" id="IPR039125">
    <property type="entry name" value="7tmB1_GLP2R"/>
</dbReference>
<dbReference type="InterPro" id="IPR050332">
    <property type="entry name" value="GPCR_2"/>
</dbReference>
<dbReference type="InterPro" id="IPR017981">
    <property type="entry name" value="GPCR_2-like_7TM"/>
</dbReference>
<dbReference type="InterPro" id="IPR036445">
    <property type="entry name" value="GPCR_2_extracell_dom_sf"/>
</dbReference>
<dbReference type="InterPro" id="IPR001879">
    <property type="entry name" value="GPCR_2_extracellular_dom"/>
</dbReference>
<dbReference type="InterPro" id="IPR000832">
    <property type="entry name" value="GPCR_2_secretin-like"/>
</dbReference>
<dbReference type="InterPro" id="IPR017983">
    <property type="entry name" value="GPCR_2_secretin-like_CS"/>
</dbReference>
<dbReference type="PANTHER" id="PTHR45620:SF23">
    <property type="entry name" value="GLUCAGON-LIKE PEPTIDE 2 RECEPTOR"/>
    <property type="match status" value="1"/>
</dbReference>
<dbReference type="PANTHER" id="PTHR45620">
    <property type="entry name" value="PDF RECEPTOR-LIKE PROTEIN-RELATED"/>
    <property type="match status" value="1"/>
</dbReference>
<dbReference type="Pfam" id="PF00002">
    <property type="entry name" value="7tm_2"/>
    <property type="match status" value="1"/>
</dbReference>
<dbReference type="Pfam" id="PF02793">
    <property type="entry name" value="HRM"/>
    <property type="match status" value="1"/>
</dbReference>
<dbReference type="PRINTS" id="PR00249">
    <property type="entry name" value="GPCRSECRETIN"/>
</dbReference>
<dbReference type="SMART" id="SM00008">
    <property type="entry name" value="HormR"/>
    <property type="match status" value="1"/>
</dbReference>
<dbReference type="SUPFAM" id="SSF81321">
    <property type="entry name" value="Family A G protein-coupled receptor-like"/>
    <property type="match status" value="1"/>
</dbReference>
<dbReference type="SUPFAM" id="SSF111418">
    <property type="entry name" value="Hormone receptor domain"/>
    <property type="match status" value="1"/>
</dbReference>
<dbReference type="PROSITE" id="PS00649">
    <property type="entry name" value="G_PROTEIN_RECEP_F2_1"/>
    <property type="match status" value="1"/>
</dbReference>
<dbReference type="PROSITE" id="PS50227">
    <property type="entry name" value="G_PROTEIN_RECEP_F2_3"/>
    <property type="match status" value="1"/>
</dbReference>
<dbReference type="PROSITE" id="PS50261">
    <property type="entry name" value="G_PROTEIN_RECEP_F2_4"/>
    <property type="match status" value="1"/>
</dbReference>
<keyword id="KW-0002">3D-structure</keyword>
<keyword id="KW-1003">Cell membrane</keyword>
<keyword id="KW-1015">Disulfide bond</keyword>
<keyword id="KW-0297">G-protein coupled receptor</keyword>
<keyword id="KW-0325">Glycoprotein</keyword>
<keyword id="KW-0472">Membrane</keyword>
<keyword id="KW-1267">Proteomics identification</keyword>
<keyword id="KW-0675">Receptor</keyword>
<keyword id="KW-1185">Reference proteome</keyword>
<keyword id="KW-0807">Transducer</keyword>
<keyword id="KW-0812">Transmembrane</keyword>
<keyword id="KW-1133">Transmembrane helix</keyword>
<evidence type="ECO:0000250" key="1"/>
<evidence type="ECO:0000255" key="2"/>
<evidence type="ECO:0000269" key="3">
    <source>
    </source>
</evidence>
<evidence type="ECO:0000305" key="4"/>
<evidence type="ECO:0007829" key="5">
    <source>
        <dbReference type="PDB" id="7D68"/>
    </source>
</evidence>
<comment type="function">
    <text>This is a receptor for glucagon-like peptide 2. The activity of this receptor is mediated by G proteins which activate adenylyl cyclase.</text>
</comment>
<comment type="subcellular location">
    <subcellularLocation>
        <location>Cell membrane</location>
        <topology>Multi-pass membrane protein</topology>
    </subcellularLocation>
</comment>
<comment type="similarity">
    <text evidence="4">Belongs to the G-protein coupled receptor 2 family.</text>
</comment>
<protein>
    <recommendedName>
        <fullName>Glucagon-like peptide 2 receptor</fullName>
        <shortName>GLP-2 receptor</shortName>
        <shortName>GLP-2-R</shortName>
        <shortName>GLP-2R</shortName>
    </recommendedName>
</protein>
<accession>O95838</accession>
<accession>Q4VAT3</accession>
<feature type="chain" id="PRO_0000012838" description="Glucagon-like peptide 2 receptor">
    <location>
        <begin position="1"/>
        <end position="553"/>
    </location>
</feature>
<feature type="topological domain" description="Extracellular" evidence="1">
    <location>
        <begin position="1"/>
        <end position="173"/>
    </location>
</feature>
<feature type="transmembrane region" description="Helical; Name=1" evidence="1">
    <location>
        <begin position="174"/>
        <end position="198"/>
    </location>
</feature>
<feature type="topological domain" description="Cytoplasmic" evidence="1">
    <location>
        <begin position="199"/>
        <end position="210"/>
    </location>
</feature>
<feature type="transmembrane region" description="Helical; Name=2" evidence="1">
    <location>
        <begin position="211"/>
        <end position="235"/>
    </location>
</feature>
<feature type="topological domain" description="Extracellular" evidence="1">
    <location>
        <begin position="236"/>
        <end position="261"/>
    </location>
</feature>
<feature type="transmembrane region" description="Helical; Name=3" evidence="1">
    <location>
        <begin position="262"/>
        <end position="285"/>
    </location>
</feature>
<feature type="topological domain" description="Cytoplasmic" evidence="1">
    <location>
        <begin position="286"/>
        <end position="299"/>
    </location>
</feature>
<feature type="transmembrane region" description="Helical; Name=4" evidence="1">
    <location>
        <begin position="300"/>
        <end position="321"/>
    </location>
</feature>
<feature type="topological domain" description="Extracellular" evidence="1">
    <location>
        <begin position="322"/>
        <end position="339"/>
    </location>
</feature>
<feature type="transmembrane region" description="Helical; Name=5" evidence="1">
    <location>
        <begin position="340"/>
        <end position="362"/>
    </location>
</feature>
<feature type="topological domain" description="Cytoplasmic" evidence="1">
    <location>
        <begin position="363"/>
        <end position="386"/>
    </location>
</feature>
<feature type="transmembrane region" description="Helical; Name=6" evidence="1">
    <location>
        <begin position="387"/>
        <end position="405"/>
    </location>
</feature>
<feature type="topological domain" description="Extracellular" evidence="1">
    <location>
        <begin position="406"/>
        <end position="417"/>
    </location>
</feature>
<feature type="transmembrane region" description="Helical; Name=7" evidence="1">
    <location>
        <begin position="418"/>
        <end position="438"/>
    </location>
</feature>
<feature type="topological domain" description="Cytoplasmic" evidence="1">
    <location>
        <begin position="439"/>
        <end position="550"/>
    </location>
</feature>
<feature type="glycosylation site" description="N-linked (GlcNAc...) asparagine" evidence="2">
    <location>
        <position position="97"/>
    </location>
</feature>
<feature type="glycosylation site" description="N-linked (GlcNAc...) asparagine" evidence="2">
    <location>
        <position position="113"/>
    </location>
</feature>
<feature type="glycosylation site" description="N-linked (GlcNAc...) asparagine" evidence="2">
    <location>
        <position position="148"/>
    </location>
</feature>
<feature type="glycosylation site" description="N-linked (GlcNAc...) asparagine" evidence="2">
    <location>
        <position position="162"/>
    </location>
</feature>
<feature type="disulfide bond" evidence="1">
    <location>
        <begin position="83"/>
        <end position="105"/>
    </location>
</feature>
<feature type="disulfide bond" evidence="1">
    <location>
        <begin position="96"/>
        <end position="137"/>
    </location>
</feature>
<feature type="disulfide bond" evidence="1">
    <location>
        <begin position="118"/>
        <end position="159"/>
    </location>
</feature>
<feature type="sequence variant" id="VAR_033967" description="In dbSNP:rs8072568.">
    <original>H</original>
    <variation>L</variation>
    <location>
        <position position="22"/>
    </location>
</feature>
<feature type="sequence variant" id="VAR_033968" description="In dbSNP:rs17681684." evidence="3">
    <original>D</original>
    <variation>N</variation>
    <location>
        <position position="470"/>
    </location>
</feature>
<feature type="sequence variant" id="VAR_033969" description="In dbSNP:rs16958918.">
    <original>R</original>
    <variation>H</variation>
    <location>
        <position position="523"/>
    </location>
</feature>
<feature type="helix" evidence="5">
    <location>
        <begin position="167"/>
        <end position="202"/>
    </location>
</feature>
<feature type="helix" evidence="5">
    <location>
        <begin position="209"/>
        <end position="238"/>
    </location>
</feature>
<feature type="helix" evidence="5">
    <location>
        <begin position="253"/>
        <end position="256"/>
    </location>
</feature>
<feature type="helix" evidence="5">
    <location>
        <begin position="259"/>
        <end position="287"/>
    </location>
</feature>
<feature type="strand" evidence="5">
    <location>
        <begin position="290"/>
        <end position="292"/>
    </location>
</feature>
<feature type="turn" evidence="5">
    <location>
        <begin position="300"/>
        <end position="302"/>
    </location>
</feature>
<feature type="helix" evidence="5">
    <location>
        <begin position="303"/>
        <end position="307"/>
    </location>
</feature>
<feature type="helix" evidence="5">
    <location>
        <begin position="312"/>
        <end position="324"/>
    </location>
</feature>
<feature type="strand" evidence="5">
    <location>
        <begin position="336"/>
        <end position="338"/>
    </location>
</feature>
<feature type="helix" evidence="5">
    <location>
        <begin position="341"/>
        <end position="370"/>
    </location>
</feature>
<feature type="helix" evidence="5">
    <location>
        <begin position="376"/>
        <end position="394"/>
    </location>
</feature>
<feature type="helix" evidence="5">
    <location>
        <begin position="399"/>
        <end position="403"/>
    </location>
</feature>
<feature type="helix" evidence="5">
    <location>
        <begin position="412"/>
        <end position="436"/>
    </location>
</feature>
<feature type="turn" evidence="5">
    <location>
        <begin position="437"/>
        <end position="439"/>
    </location>
</feature>
<feature type="helix" evidence="5">
    <location>
        <begin position="441"/>
        <end position="451"/>
    </location>
</feature>
<proteinExistence type="evidence at protein level"/>
<organism>
    <name type="scientific">Homo sapiens</name>
    <name type="common">Human</name>
    <dbReference type="NCBI Taxonomy" id="9606"/>
    <lineage>
        <taxon>Eukaryota</taxon>
        <taxon>Metazoa</taxon>
        <taxon>Chordata</taxon>
        <taxon>Craniata</taxon>
        <taxon>Vertebrata</taxon>
        <taxon>Euteleostomi</taxon>
        <taxon>Mammalia</taxon>
        <taxon>Eutheria</taxon>
        <taxon>Euarchontoglires</taxon>
        <taxon>Primates</taxon>
        <taxon>Haplorrhini</taxon>
        <taxon>Catarrhini</taxon>
        <taxon>Hominidae</taxon>
        <taxon>Homo</taxon>
    </lineage>
</organism>
<gene>
    <name type="primary">GLP2R</name>
</gene>
<sequence length="553" mass="63001">MKLGSSRAGPGRGSAGLLPGVHELPMGIPAPWGTSPLSFHRKCSLWAPGRPFLTLVLLVSIKQVTGSLLEETTRKWAQYKQACLRDLLKEPSGIFCNGTFDQYVCWPHSSPGNVSVPCPSYLPWWSEESSGRAYRHCLAQGTWQTIENATDIWQDDSECSENHSFKQNVDRYALLSTLQLMYTVGYSFSLISLFLALTLLLFLRKLHCTRNYIHMNLFASFILRTLAVLVKDVVFYNSYSKRPDNENGWMSYLSEMSTSCRSVQVLLHYFVGANYLWLLVEGLYLHTLLEPTVLPERRLWPRYLLLGWAFPVLFVVPWGFARAHLENTGCWTTNGNKKIWWIIRGPMMLCVTVNFFIFLKILKLLISKLKAHQMCFRDYKYRLAKSTLVLIPLLGVHEILFSFITDDQVEGFAKLIRLFIQLTLSSFHGFLVALQYGFANGEVKAELRKYWVRFLLARHSGCRACVLGKDFRFLGKCPKKLSEGDGAEKLRKLQPSLNSGRLLHLAMRGLGELGAQPQQDHARWPRGSSLSECSEGDVTMANTMEEILEESEI</sequence>
<reference key="1">
    <citation type="journal article" date="1999" name="Proc. Natl. Acad. Sci. U.S.A.">
        <title>Prototypic G protein-coupled receptor for the intestinotrophic factor glucagon-like peptide 2.</title>
        <authorList>
            <person name="Munroe D.G."/>
            <person name="Gupta A.K."/>
            <person name="Kooshesh F."/>
            <person name="Vyas T.B."/>
            <person name="Rizkalla G."/>
            <person name="Wang H."/>
            <person name="Demchyshyn L."/>
            <person name="Yang Z.-H."/>
            <person name="Kamboj R.K."/>
            <person name="Chen H."/>
            <person name="McCallum K."/>
            <person name="Sumner-Smith M."/>
            <person name="Drucker D.J."/>
            <person name="Crivici A."/>
        </authorList>
    </citation>
    <scope>NUCLEOTIDE SEQUENCE [MRNA]</scope>
    <source>
        <tissue>Stomach</tissue>
    </source>
</reference>
<reference key="2">
    <citation type="journal article" date="2004" name="Genome Res.">
        <title>The status, quality, and expansion of the NIH full-length cDNA project: the Mammalian Gene Collection (MGC).</title>
        <authorList>
            <consortium name="The MGC Project Team"/>
        </authorList>
    </citation>
    <scope>NUCLEOTIDE SEQUENCE [LARGE SCALE MRNA]</scope>
    <scope>VARIANT ASN-470</scope>
</reference>